<keyword id="KW-0375">Hydrogen ion transport</keyword>
<keyword id="KW-0406">Ion transport</keyword>
<keyword id="KW-1185">Reference proteome</keyword>
<keyword id="KW-0813">Transport</keyword>
<dbReference type="EMBL" id="AJ005899">
    <property type="protein sequence ID" value="CAA06756.1"/>
    <property type="molecule type" value="mRNA"/>
</dbReference>
<dbReference type="SMR" id="O82702"/>
<dbReference type="STRING" id="4097.O82702"/>
<dbReference type="PaxDb" id="4097-O82702"/>
<dbReference type="ProMEX" id="O82702"/>
<dbReference type="PhylomeDB" id="O82702"/>
<dbReference type="Proteomes" id="UP000084051">
    <property type="component" value="Unplaced"/>
</dbReference>
<dbReference type="GO" id="GO:0000221">
    <property type="term" value="C:vacuolar proton-transporting V-type ATPase, V1 domain"/>
    <property type="evidence" value="ECO:0000318"/>
    <property type="project" value="GO_Central"/>
</dbReference>
<dbReference type="GO" id="GO:0016887">
    <property type="term" value="F:ATP hydrolysis activity"/>
    <property type="evidence" value="ECO:0000318"/>
    <property type="project" value="GO_Central"/>
</dbReference>
<dbReference type="GO" id="GO:0046961">
    <property type="term" value="F:proton-transporting ATPase activity, rotational mechanism"/>
    <property type="evidence" value="ECO:0000318"/>
    <property type="project" value="GO_Central"/>
</dbReference>
<dbReference type="FunFam" id="1.20.5.2950:FF:000001">
    <property type="entry name" value="V-type proton ATPase subunit G"/>
    <property type="match status" value="1"/>
</dbReference>
<dbReference type="Gene3D" id="1.20.5.2950">
    <property type="match status" value="1"/>
</dbReference>
<dbReference type="InterPro" id="IPR005124">
    <property type="entry name" value="V-ATPase_G"/>
</dbReference>
<dbReference type="NCBIfam" id="TIGR01147">
    <property type="entry name" value="V_ATP_synt_G"/>
    <property type="match status" value="1"/>
</dbReference>
<dbReference type="PANTHER" id="PTHR12713:SF11">
    <property type="entry name" value="V-TYPE PROTON ATPASE SUBUNIT G"/>
    <property type="match status" value="1"/>
</dbReference>
<dbReference type="PANTHER" id="PTHR12713">
    <property type="entry name" value="VACUOLAR ATP SYNTHASE SUBUNIT G"/>
    <property type="match status" value="1"/>
</dbReference>
<dbReference type="Pfam" id="PF03179">
    <property type="entry name" value="V-ATPase_G"/>
    <property type="match status" value="1"/>
</dbReference>
<organism>
    <name type="scientific">Nicotiana tabacum</name>
    <name type="common">Common tobacco</name>
    <dbReference type="NCBI Taxonomy" id="4097"/>
    <lineage>
        <taxon>Eukaryota</taxon>
        <taxon>Viridiplantae</taxon>
        <taxon>Streptophyta</taxon>
        <taxon>Embryophyta</taxon>
        <taxon>Tracheophyta</taxon>
        <taxon>Spermatophyta</taxon>
        <taxon>Magnoliopsida</taxon>
        <taxon>eudicotyledons</taxon>
        <taxon>Gunneridae</taxon>
        <taxon>Pentapetalae</taxon>
        <taxon>asterids</taxon>
        <taxon>lamiids</taxon>
        <taxon>Solanales</taxon>
        <taxon>Solanaceae</taxon>
        <taxon>Nicotianoideae</taxon>
        <taxon>Nicotianeae</taxon>
        <taxon>Nicotiana</taxon>
    </lineage>
</organism>
<proteinExistence type="inferred from homology"/>
<accession>O82702</accession>
<name>VATG1_TOBAC</name>
<comment type="function">
    <text>Catalytic subunit of the peripheral V1 complex of vacuolar ATPase (V-ATPase). V-ATPase is responsible for acidifying a variety of intracellular compartments in eukaryotic cells.</text>
</comment>
<comment type="subunit">
    <text>V-ATPase is a heteromultimeric enzyme composed of a peripheral catalytic V1 complex (components A to H) attached to an integral membrane V0 proton pore complex (components: a, c, c', c'' and d).</text>
</comment>
<comment type="similarity">
    <text evidence="1">Belongs to the V-ATPase G subunit family.</text>
</comment>
<sequence>MASSSGQNGIQLLLAAEQEAQHIVNNARTAKQARLKQAKEEAEKEIAEFRAYMEAEFQRKLEQTSGDSGANVKRLEQETDAKIEHLKTEAERVSPDVVQMLLRHVTTVKN</sequence>
<evidence type="ECO:0000305" key="1"/>
<protein>
    <recommendedName>
        <fullName>V-type proton ATPase subunit G 1</fullName>
        <shortName>V-ATPase subunit G 1</shortName>
    </recommendedName>
    <alternativeName>
        <fullName>Vacuolar proton pump subunit G 1</fullName>
    </alternativeName>
</protein>
<feature type="chain" id="PRO_0000192912" description="V-type proton ATPase subunit G 1">
    <location>
        <begin position="1"/>
        <end position="110"/>
    </location>
</feature>
<gene>
    <name type="primary">VATG1</name>
    <name type="synonym">VAG1</name>
</gene>
<reference key="1">
    <citation type="journal article" date="1998" name="FEBS Lett.">
        <title>Cloning of the V-ATPase subunit G in plant: functional expression and sub-cellular localization.</title>
        <authorList>
            <person name="Rouquie D."/>
            <person name="Tournaire-Roux C."/>
            <person name="Szponarski W."/>
            <person name="Rossignol M."/>
            <person name="Doumas P."/>
        </authorList>
    </citation>
    <scope>NUCLEOTIDE SEQUENCE [MRNA]</scope>
    <source>
        <strain>cv. Xanthi</strain>
        <tissue>Leaf</tissue>
    </source>
</reference>